<gene>
    <name type="primary">N</name>
</gene>
<comment type="function">
    <text evidence="1">Binds dsRNA and ssRNA and probably participates in the packaging of viral genome (By similarity). In the dsRNA binding mode, the nucleocapsid protein specifically binds to the vRNA panhandle secondary structure formed at the termini of viral genome (By similarity). Does not discriminate between viral and nonviral RNAs through ssRNA binding mode (By similarity). Displays dsDNA endonuclease activity that is sequence non-specific (By similarity).</text>
</comment>
<comment type="cofactor">
    <cofactor>
        <name>Mn(2+)</name>
        <dbReference type="ChEBI" id="CHEBI:29035"/>
    </cofactor>
    <text evidence="2">Endonuclease activity is stimulated by divalent cations such as Mn2+, Co2+, and Mg2+.</text>
</comment>
<comment type="subunit">
    <text evidence="1">Probable homooligomer; forms a double superhelical polymer (By similarity). Monomer (By similarity).</text>
</comment>
<comment type="subcellular location">
    <subcellularLocation>
        <location evidence="4">Virion</location>
    </subcellularLocation>
    <text>Internal protein of virus particle.</text>
</comment>
<comment type="domain">
    <text evidence="1 5">The DQVD motif is a CASP3/caspase 3 cleavage site essential for viral replication in host cell (PubMed:31118258). However, the importance for viral replication is apprently not linked to caspase cleavage (PubMed:31118258). This motif is involved in homooligomerization (By similarity).</text>
</comment>
<comment type="PTM">
    <text evidence="1 4 5">Cleaved at the DQVD motif by host CASP3/caspase 3 in mammalian cells at 48 hours postinfection giving rise to cleavage products of about 30 kDa and 22 kDa that remain associated (PubMed:30720418, PubMed:31118258). Only the monomeric form is cleaved (By similarity). Little or no cleavage in tick cells (PubMed:30720418). Caspase cleavage reduces the viral polymerase activity (By similarity). Caspase cleavage is not required for productive infection in mammalian or tick host cells (PubMed:31118258).</text>
</comment>
<comment type="similarity">
    <text evidence="6">Belongs to the nairovirus nucleocapsid protein family.</text>
</comment>
<organism>
    <name type="scientific">Hazara virus (isolate JC280)</name>
    <dbReference type="NCBI Taxonomy" id="11597"/>
    <lineage>
        <taxon>Viruses</taxon>
        <taxon>Riboviria</taxon>
        <taxon>Orthornavirae</taxon>
        <taxon>Negarnaviricota</taxon>
        <taxon>Polyploviricotina</taxon>
        <taxon>Ellioviricetes</taxon>
        <taxon>Bunyavirales</taxon>
        <taxon>Nairoviridae</taxon>
        <taxon>Orthonairovirus</taxon>
        <taxon>Orthonairovirus hazaraense</taxon>
    </lineage>
</organism>
<name>NCAP_HAZVJ</name>
<keyword id="KW-0002">3D-structure</keyword>
<keyword id="KW-0167">Capsid protein</keyword>
<keyword id="KW-1139">Helical capsid protein</keyword>
<keyword id="KW-0378">Hydrolase</keyword>
<keyword id="KW-1185">Reference proteome</keyword>
<keyword id="KW-0687">Ribonucleoprotein</keyword>
<keyword id="KW-0694">RNA-binding</keyword>
<keyword id="KW-0543">Viral nucleoprotein</keyword>
<keyword id="KW-0946">Virion</keyword>
<sequence length="485" mass="54186">MENKIVASTKEEFNTWYKQFAEKHKLNNKYTESASFCAEIPQLDTYKYKMELASTDNERDAIYSSALIEATRFCAPIMECAWASCTGTVKRGLEWFDKNKDSDTVKVWDANYQKLRTETPPAEALLAYQKAALNWRKDVGFSIGEYTSILKKAVAAEYKVPGTVINNIKEMLSDMIRRRNRIINGGSDDAPKRGPVGREHLDWCREFASGKFLNAFNPPWGEINKAGKSGYPLLATGLAKLVELEGKDVMDKAKASIAQLEGWVKENKDQVDQDKAEDLLKGVRESYKTALALAKLSNAFRAQGAQIDTVFSSYYWPWKAGVTPVTFPSVSQFLFELGKNPKGQKKMQKALINTPLKWGKRLIELFADNDFTENRIYMHPCVLTSGRMSELGISFGAVPVTSPDDAAQGSGHTKAVLNYKTKTEVGNPCACIISSLFEIQKAGYDIESMDIVASEHLLHQSLVGKRSPFQNAYLIKGNATNINII</sequence>
<organismHost>
    <name type="scientific">Ixodes</name>
    <dbReference type="NCBI Taxonomy" id="6944"/>
</organismHost>
<feature type="chain" id="PRO_0000222008" description="Nucleoprotein">
    <location>
        <begin position="1"/>
        <end position="485"/>
    </location>
</feature>
<feature type="short sequence motif" description="DQVD" evidence="5">
    <location>
        <begin position="269"/>
        <end position="272"/>
    </location>
</feature>
<feature type="site" description="Homooligomerization" evidence="3">
    <location>
        <position position="216"/>
    </location>
</feature>
<feature type="site" description="Homooligomerization" evidence="3">
    <location>
        <position position="263"/>
    </location>
</feature>
<feature type="site" description="Homooligomerization" evidence="3">
    <location>
        <position position="270"/>
    </location>
</feature>
<feature type="site" description="Homooligomerization" evidence="3">
    <location>
        <position position="271"/>
    </location>
</feature>
<feature type="site" description="Cleavage by host CASP3/caspase 3" evidence="4 5">
    <location>
        <begin position="272"/>
        <end position="273"/>
    </location>
</feature>
<feature type="site" description="Homooligomerization" evidence="3">
    <location>
        <position position="275"/>
    </location>
</feature>
<feature type="site" description="Homooligomerization" evidence="3">
    <location>
        <position position="279"/>
    </location>
</feature>
<feature type="site" description="Homooligomerization" evidence="3">
    <location>
        <position position="355"/>
    </location>
</feature>
<feature type="mutagenesis site" description="Complete loss of viral replication." evidence="5">
    <original>DQVD</original>
    <variation>AQVA</variation>
    <location>
        <begin position="269"/>
        <end position="272"/>
    </location>
</feature>
<feature type="mutagenesis site" description="Complete loss of cleavage by host CASP3/caspase 3. No effect on virus repliication in mammlian or tick cells." evidence="5">
    <original>D</original>
    <variation>E</variation>
    <location>
        <position position="269"/>
    </location>
</feature>
<feature type="mutagenesis site" description="Complete loss of cleavage by host CASP3/caspase 3." evidence="4">
    <original>D</original>
    <variation>A</variation>
    <location>
        <position position="272"/>
    </location>
</feature>
<feature type="mutagenesis site" description="Complete loss of cleavage by host CASP3/caspase 3. No effect on virus repliication in mammlian or tick cells." evidence="5">
    <original>D</original>
    <variation>E</variation>
    <location>
        <position position="272"/>
    </location>
</feature>
<feature type="sequence conflict" description="In Ref. 2; AGH10339 and 3; AJW66843." evidence="6" ref="2 3">
    <original>L</original>
    <variation>Q</variation>
    <location>
        <position position="296"/>
    </location>
</feature>
<feature type="sequence conflict" description="In Ref. 2; AGH10339 and 3; AJW66843." evidence="6" ref="2 3">
    <original>P</original>
    <variation>L</variation>
    <location>
        <position position="317"/>
    </location>
</feature>
<feature type="helix" evidence="10">
    <location>
        <begin position="10"/>
        <end position="24"/>
    </location>
</feature>
<feature type="strand" evidence="10">
    <location>
        <begin position="29"/>
        <end position="33"/>
    </location>
</feature>
<feature type="helix" evidence="10">
    <location>
        <begin position="44"/>
        <end position="52"/>
    </location>
</feature>
<feature type="helix" evidence="10">
    <location>
        <begin position="56"/>
        <end position="71"/>
    </location>
</feature>
<feature type="turn" evidence="9">
    <location>
        <begin position="72"/>
        <end position="74"/>
    </location>
</feature>
<feature type="helix" evidence="10">
    <location>
        <begin position="77"/>
        <end position="84"/>
    </location>
</feature>
<feature type="helix" evidence="10">
    <location>
        <begin position="86"/>
        <end position="99"/>
    </location>
</feature>
<feature type="helix" evidence="10">
    <location>
        <begin position="103"/>
        <end position="109"/>
    </location>
</feature>
<feature type="helix" evidence="10">
    <location>
        <begin position="112"/>
        <end position="115"/>
    </location>
</feature>
<feature type="helix" evidence="10">
    <location>
        <begin position="122"/>
        <end position="139"/>
    </location>
</feature>
<feature type="helix" evidence="10">
    <location>
        <begin position="145"/>
        <end position="147"/>
    </location>
</feature>
<feature type="strand" evidence="10">
    <location>
        <begin position="156"/>
        <end position="159"/>
    </location>
</feature>
<feature type="turn" evidence="10">
    <location>
        <begin position="162"/>
        <end position="164"/>
    </location>
</feature>
<feature type="helix" evidence="10">
    <location>
        <begin position="165"/>
        <end position="183"/>
    </location>
</feature>
<feature type="helix" evidence="10">
    <location>
        <begin position="199"/>
        <end position="208"/>
    </location>
</feature>
<feature type="helix" evidence="10">
    <location>
        <begin position="212"/>
        <end position="216"/>
    </location>
</feature>
<feature type="strand" evidence="10">
    <location>
        <begin position="228"/>
        <end position="232"/>
    </location>
</feature>
<feature type="helix" evidence="10">
    <location>
        <begin position="233"/>
        <end position="245"/>
    </location>
</feature>
<feature type="helix" evidence="10">
    <location>
        <begin position="248"/>
        <end position="266"/>
    </location>
</feature>
<feature type="helix" evidence="10">
    <location>
        <begin position="268"/>
        <end position="270"/>
    </location>
</feature>
<feature type="helix" evidence="10">
    <location>
        <begin position="273"/>
        <end position="296"/>
    </location>
</feature>
<feature type="helix" evidence="10">
    <location>
        <begin position="298"/>
        <end position="303"/>
    </location>
</feature>
<feature type="helix" evidence="10">
    <location>
        <begin position="309"/>
        <end position="319"/>
    </location>
</feature>
<feature type="turn" evidence="10">
    <location>
        <begin position="324"/>
        <end position="326"/>
    </location>
</feature>
<feature type="helix" evidence="10">
    <location>
        <begin position="327"/>
        <end position="337"/>
    </location>
</feature>
<feature type="helix" evidence="10">
    <location>
        <begin position="344"/>
        <end position="353"/>
    </location>
</feature>
<feature type="strand" evidence="10">
    <location>
        <begin position="354"/>
        <end position="356"/>
    </location>
</feature>
<feature type="helix" evidence="10">
    <location>
        <begin position="357"/>
        <end position="364"/>
    </location>
</feature>
<feature type="strand" evidence="10">
    <location>
        <begin position="368"/>
        <end position="370"/>
    </location>
</feature>
<feature type="helix" evidence="10">
    <location>
        <begin position="375"/>
        <end position="377"/>
    </location>
</feature>
<feature type="helix" evidence="10">
    <location>
        <begin position="388"/>
        <end position="395"/>
    </location>
</feature>
<feature type="strand" evidence="9">
    <location>
        <begin position="396"/>
        <end position="398"/>
    </location>
</feature>
<feature type="helix" evidence="10">
    <location>
        <begin position="403"/>
        <end position="408"/>
    </location>
</feature>
<feature type="helix" evidence="10">
    <location>
        <begin position="413"/>
        <end position="418"/>
    </location>
</feature>
<feature type="helix" evidence="10">
    <location>
        <begin position="423"/>
        <end position="425"/>
    </location>
</feature>
<feature type="helix" evidence="10">
    <location>
        <begin position="428"/>
        <end position="443"/>
    </location>
</feature>
<feature type="turn" evidence="10">
    <location>
        <begin position="446"/>
        <end position="448"/>
    </location>
</feature>
<feature type="strand" evidence="10">
    <location>
        <begin position="449"/>
        <end position="451"/>
    </location>
</feature>
<feature type="helix" evidence="10">
    <location>
        <begin position="453"/>
        <end position="462"/>
    </location>
</feature>
<feature type="helix" evidence="9">
    <location>
        <begin position="479"/>
        <end position="481"/>
    </location>
</feature>
<feature type="strand" evidence="10">
    <location>
        <begin position="483"/>
        <end position="485"/>
    </location>
</feature>
<reference key="1">
    <citation type="journal article" date="1992" name="Virology">
        <title>Comparison of the S RNA segments and nucleoprotein sequences of Crimean-Congo hemorrhagic fever, Hazara, and Dugbe viruses.</title>
        <authorList>
            <person name="Marriott A.C."/>
            <person name="Nuttall P.A."/>
        </authorList>
    </citation>
    <scope>NUCLEOTIDE SEQUENCE [GENOMIC RNA]</scope>
</reference>
<reference key="2">
    <citation type="submission" date="2012-12" db="EMBL/GenBank/DDBJ databases">
        <authorList>
            <person name="Chamberlain J."/>
            <person name="Hewson R."/>
        </authorList>
    </citation>
    <scope>NUCLEOTIDE SEQUENCE [GENOMIC DNA]</scope>
</reference>
<reference key="3">
    <citation type="submission" date="2015-01" db="EMBL/GenBank/DDBJ databases">
        <authorList>
            <person name="Lewandowski K.S."/>
            <person name="Bell A.J."/>
            <person name="Wooldridge D."/>
            <person name="Chamberlain J."/>
            <person name="Afrough B."/>
            <person name="Dowall S."/>
            <person name="Vipond R."/>
            <person name="Gharbia S."/>
            <person name="Hewson R."/>
        </authorList>
    </citation>
    <scope>NUCLEOTIDE SEQUENCE [GENOMIC DNA]</scope>
</reference>
<reference key="4">
    <citation type="journal article" date="2019" name="J. Gen. Virol.">
        <title>Hazara nairovirus elicits differential induction of apoptosis and nucleocapsid protein cleavage in mammalian and tick cells.</title>
        <authorList>
            <person name="Fuller J."/>
            <person name="Surtees R.A."/>
            <person name="Shaw A.B."/>
            <person name="Alvarez-Rodriguez B."/>
            <person name="Slack G.S."/>
            <person name="Bell-Sakyi L."/>
            <person name="Mankouri J."/>
            <person name="Edwards T.A."/>
            <person name="Hewson R."/>
            <person name="Barr J.N."/>
        </authorList>
    </citation>
    <scope>PROTEOLYTIC CLEAVAGE</scope>
    <scope>SUBCELLULAR LOCATION</scope>
    <scope>MUTAGENESIS OF ASP-272</scope>
</reference>
<reference key="5">
    <citation type="journal article" date="2019" name="J. Virol.">
        <title>Rescue of Infectious Recombinant Hazara Nairovirus from cDNA Reveals the Nucleocapsid Protein DQVD Caspase Cleavage Motif Performs an Essential Role other than Cleavage.</title>
        <authorList>
            <person name="Fuller J."/>
            <person name="Surtees R.A."/>
            <person name="Slack G.S."/>
            <person name="Mankouri J."/>
            <person name="Hewson R."/>
            <person name="Barr J.N."/>
        </authorList>
    </citation>
    <scope>DOMAIN</scope>
    <scope>MUTAGENESIS OF 266-ASP--ASP-269 AND ASP-269</scope>
    <scope>PROTEOLYTIC CLEAVAGE</scope>
</reference>
<reference evidence="8" key="6">
    <citation type="journal article" date="2015" name="BMC Struct. Biol.">
        <title>The crystal structure of the Hazara virus nucleocapsid protein.</title>
        <authorList>
            <person name="Surtees R."/>
            <person name="Ariza A."/>
            <person name="Punch E.K."/>
            <person name="Trinh C.H."/>
            <person name="Dowall S.D."/>
            <person name="Hewson R."/>
            <person name="Hiscox J.A."/>
            <person name="Barr J.N."/>
            <person name="Edwards T.A."/>
        </authorList>
    </citation>
    <scope>X-RAY CRYSTALLOGRAPHY (2.70 ANGSTROMS)</scope>
</reference>
<reference evidence="7" key="7">
    <citation type="journal article" date="2015" name="J. Virol.">
        <title>Structural and Functional Diversity of Nairovirus-Encoded Nucleoproteins.</title>
        <authorList>
            <person name="Wang W."/>
            <person name="Liu X."/>
            <person name="Wang X."/>
            <person name="Dong H."/>
            <person name="Ma C."/>
            <person name="Wang J."/>
            <person name="Liu B."/>
            <person name="Mao Y."/>
            <person name="Wang Y."/>
            <person name="Li T."/>
            <person name="Yang C."/>
            <person name="Guo Y."/>
        </authorList>
    </citation>
    <scope>X-RAY CRYSTALLOGRAPHY (2.90 ANGSTROMS)</scope>
    <scope>COFACTOR</scope>
</reference>
<evidence type="ECO:0000250" key="1">
    <source>
        <dbReference type="UniProtKB" id="P89522"/>
    </source>
</evidence>
<evidence type="ECO:0000269" key="2">
    <source>
    </source>
</evidence>
<evidence type="ECO:0000269" key="3">
    <source>
    </source>
</evidence>
<evidence type="ECO:0000269" key="4">
    <source>
    </source>
</evidence>
<evidence type="ECO:0000269" key="5">
    <source>
    </source>
</evidence>
<evidence type="ECO:0000305" key="6"/>
<evidence type="ECO:0007744" key="7">
    <source>
        <dbReference type="PDB" id="4XZE"/>
    </source>
</evidence>
<evidence type="ECO:0007744" key="8">
    <source>
        <dbReference type="PDB" id="5A97"/>
    </source>
</evidence>
<evidence type="ECO:0007829" key="9">
    <source>
        <dbReference type="PDB" id="4XZE"/>
    </source>
</evidence>
<evidence type="ECO:0007829" key="10">
    <source>
        <dbReference type="PDB" id="5A97"/>
    </source>
</evidence>
<protein>
    <recommendedName>
        <fullName>Nucleoprotein</fullName>
        <ecNumber evidence="1">3.1.-.-</ecNumber>
    </recommendedName>
    <alternativeName>
        <fullName>Nucleocapsid protein</fullName>
        <shortName>Protein N</shortName>
    </alternativeName>
</protein>
<accession>P27318</accession>
<accession>M4PWE6</accession>
<dbReference type="EC" id="3.1.-.-" evidence="1"/>
<dbReference type="EMBL" id="M86624">
    <property type="protein sequence ID" value="AAA43842.1"/>
    <property type="molecule type" value="Genomic_RNA"/>
</dbReference>
<dbReference type="EMBL" id="KC344857">
    <property type="protein sequence ID" value="AGH10339.1"/>
    <property type="molecule type" value="Viral_cRNA"/>
</dbReference>
<dbReference type="EMBL" id="KP406725">
    <property type="protein sequence ID" value="AJW66843.1"/>
    <property type="molecule type" value="Viral_cRNA"/>
</dbReference>
<dbReference type="PIR" id="A42990">
    <property type="entry name" value="VHVUHJ"/>
</dbReference>
<dbReference type="PDB" id="4XZE">
    <property type="method" value="X-ray"/>
    <property type="resolution" value="2.90 A"/>
    <property type="chains" value="A/B/C/D=1-485"/>
</dbReference>
<dbReference type="PDB" id="5A97">
    <property type="method" value="X-ray"/>
    <property type="resolution" value="2.70 A"/>
    <property type="chains" value="A/B/C/D=1-485"/>
</dbReference>
<dbReference type="PDBsum" id="4XZE"/>
<dbReference type="PDBsum" id="5A97"/>
<dbReference type="SMR" id="P27318"/>
<dbReference type="EvolutionaryTrace" id="P27318"/>
<dbReference type="Proteomes" id="UP000170142">
    <property type="component" value="Genome"/>
</dbReference>
<dbReference type="GO" id="GO:0019029">
    <property type="term" value="C:helical viral capsid"/>
    <property type="evidence" value="ECO:0007669"/>
    <property type="project" value="UniProtKB-KW"/>
</dbReference>
<dbReference type="GO" id="GO:1990904">
    <property type="term" value="C:ribonucleoprotein complex"/>
    <property type="evidence" value="ECO:0007669"/>
    <property type="project" value="UniProtKB-KW"/>
</dbReference>
<dbReference type="GO" id="GO:0019013">
    <property type="term" value="C:viral nucleocapsid"/>
    <property type="evidence" value="ECO:0007669"/>
    <property type="project" value="UniProtKB-KW"/>
</dbReference>
<dbReference type="GO" id="GO:0016787">
    <property type="term" value="F:hydrolase activity"/>
    <property type="evidence" value="ECO:0007669"/>
    <property type="project" value="UniProtKB-KW"/>
</dbReference>
<dbReference type="GO" id="GO:0003723">
    <property type="term" value="F:RNA binding"/>
    <property type="evidence" value="ECO:0007669"/>
    <property type="project" value="UniProtKB-KW"/>
</dbReference>
<dbReference type="Gene3D" id="1.20.58.1110">
    <property type="match status" value="1"/>
</dbReference>
<dbReference type="InterPro" id="IPR003486">
    <property type="entry name" value="Nairo_nucleocap"/>
</dbReference>
<dbReference type="Pfam" id="PF02477">
    <property type="entry name" value="Nairo_nucleo"/>
    <property type="match status" value="1"/>
</dbReference>
<dbReference type="PIRSF" id="PIRSF003950">
    <property type="entry name" value="N_NairoV"/>
    <property type="match status" value="1"/>
</dbReference>
<proteinExistence type="evidence at protein level"/>